<sequence length="160" mass="18395">MATAVPMKKNWSPSMKHNDMERWICIYPAYINRKKTRQEGRRLPKENCVDNPSYIEIRDVLSVSNLQFLMENKKYCRENSSEMEFRGRVRVQLRNVDGTLYNNDFPTRESIMLHIASKIPQLKTRQNKSGDSYHQQSQPQSNASGSGGGGGGKKGKGKRR</sequence>
<gene>
    <name type="primary">Srp19</name>
    <name type="ORF">CG4457</name>
</gene>
<keyword id="KW-0963">Cytoplasm</keyword>
<keyword id="KW-0539">Nucleus</keyword>
<keyword id="KW-1185">Reference proteome</keyword>
<keyword id="KW-0687">Ribonucleoprotein</keyword>
<keyword id="KW-0694">RNA-binding</keyword>
<keyword id="KW-0733">Signal recognition particle</keyword>
<evidence type="ECO:0000250" key="1">
    <source>
        <dbReference type="UniProtKB" id="J9PAS6"/>
    </source>
</evidence>
<evidence type="ECO:0000250" key="2">
    <source>
        <dbReference type="UniProtKB" id="P09132"/>
    </source>
</evidence>
<evidence type="ECO:0000256" key="3">
    <source>
        <dbReference type="SAM" id="MobiDB-lite"/>
    </source>
</evidence>
<evidence type="ECO:0000305" key="4"/>
<name>SRP19_DROME</name>
<dbReference type="EMBL" id="U35682">
    <property type="protein sequence ID" value="AAA79181.1"/>
    <property type="molecule type" value="Genomic_DNA"/>
</dbReference>
<dbReference type="EMBL" id="AE014296">
    <property type="protein sequence ID" value="AAF50575.1"/>
    <property type="molecule type" value="Genomic_DNA"/>
</dbReference>
<dbReference type="EMBL" id="AY089689">
    <property type="protein sequence ID" value="AAL90427.1"/>
    <property type="molecule type" value="mRNA"/>
</dbReference>
<dbReference type="RefSeq" id="NP_477135.2">
    <property type="nucleotide sequence ID" value="NM_057787.5"/>
</dbReference>
<dbReference type="SMR" id="P49963"/>
<dbReference type="BioGRID" id="64255">
    <property type="interactions" value="1"/>
</dbReference>
<dbReference type="ComplexPortal" id="CPX-2657">
    <property type="entry name" value="Signal recognition particle"/>
</dbReference>
<dbReference type="FunCoup" id="P49963">
    <property type="interactions" value="1370"/>
</dbReference>
<dbReference type="IntAct" id="P49963">
    <property type="interactions" value="7"/>
</dbReference>
<dbReference type="STRING" id="7227.FBpp0076589"/>
<dbReference type="PaxDb" id="7227-FBpp0076589"/>
<dbReference type="DNASU" id="38815"/>
<dbReference type="EnsemblMetazoa" id="FBtr0076879">
    <property type="protein sequence ID" value="FBpp0076589"/>
    <property type="gene ID" value="FBgn0015298"/>
</dbReference>
<dbReference type="GeneID" id="38815"/>
<dbReference type="KEGG" id="dme:Dmel_CG4457"/>
<dbReference type="AGR" id="FB:FBgn0015298"/>
<dbReference type="CTD" id="6728"/>
<dbReference type="FlyBase" id="FBgn0015298">
    <property type="gene designation" value="Srp19"/>
</dbReference>
<dbReference type="VEuPathDB" id="VectorBase:FBgn0015298"/>
<dbReference type="eggNOG" id="KOG3198">
    <property type="taxonomic scope" value="Eukaryota"/>
</dbReference>
<dbReference type="GeneTree" id="ENSGT00390000004950"/>
<dbReference type="HOGENOM" id="CLU_064201_2_1_1"/>
<dbReference type="InParanoid" id="P49963"/>
<dbReference type="OMA" id="QMERWIC"/>
<dbReference type="OrthoDB" id="2190947at2759"/>
<dbReference type="PhylomeDB" id="P49963"/>
<dbReference type="Reactome" id="R-DME-1799339">
    <property type="pathway name" value="SRP-dependent cotranslational protein targeting to membrane"/>
</dbReference>
<dbReference type="BioGRID-ORCS" id="38815">
    <property type="hits" value="1 hit in 1 CRISPR screen"/>
</dbReference>
<dbReference type="GenomeRNAi" id="38815"/>
<dbReference type="PRO" id="PR:P49963"/>
<dbReference type="Proteomes" id="UP000000803">
    <property type="component" value="Chromosome 3L"/>
</dbReference>
<dbReference type="Bgee" id="FBgn0015298">
    <property type="expression patterns" value="Expressed in spermathecum and 151 other cell types or tissues"/>
</dbReference>
<dbReference type="ExpressionAtlas" id="P49963">
    <property type="expression patterns" value="baseline and differential"/>
</dbReference>
<dbReference type="GO" id="GO:0005730">
    <property type="term" value="C:nucleolus"/>
    <property type="evidence" value="ECO:0007669"/>
    <property type="project" value="UniProtKB-SubCell"/>
</dbReference>
<dbReference type="GO" id="GO:0005786">
    <property type="term" value="C:signal recognition particle, endoplasmic reticulum targeting"/>
    <property type="evidence" value="ECO:0000318"/>
    <property type="project" value="GO_Central"/>
</dbReference>
<dbReference type="GO" id="GO:0008312">
    <property type="term" value="F:7S RNA binding"/>
    <property type="evidence" value="ECO:0000318"/>
    <property type="project" value="GO_Central"/>
</dbReference>
<dbReference type="GO" id="GO:0006617">
    <property type="term" value="P:SRP-dependent cotranslational protein targeting to membrane, signal sequence recognition"/>
    <property type="evidence" value="ECO:0000318"/>
    <property type="project" value="GO_Central"/>
</dbReference>
<dbReference type="FunFam" id="3.30.56.30:FF:000002">
    <property type="entry name" value="Signal recognition particle 19kDa"/>
    <property type="match status" value="1"/>
</dbReference>
<dbReference type="Gene3D" id="3.30.56.30">
    <property type="entry name" value="Signal recognition particle, SRP19-like subunit"/>
    <property type="match status" value="1"/>
</dbReference>
<dbReference type="InterPro" id="IPR002778">
    <property type="entry name" value="Signal_recog_particle_SRP19"/>
</dbReference>
<dbReference type="InterPro" id="IPR036521">
    <property type="entry name" value="SRP19-like_sf"/>
</dbReference>
<dbReference type="PANTHER" id="PTHR17453">
    <property type="entry name" value="SIGNAL RECOGNITION PARTICLE 19 KD PROTEIN"/>
    <property type="match status" value="1"/>
</dbReference>
<dbReference type="PANTHER" id="PTHR17453:SF0">
    <property type="entry name" value="SIGNAL RECOGNITION PARTICLE 19 KDA PROTEIN"/>
    <property type="match status" value="1"/>
</dbReference>
<dbReference type="Pfam" id="PF01922">
    <property type="entry name" value="SRP19"/>
    <property type="match status" value="1"/>
</dbReference>
<dbReference type="SUPFAM" id="SSF69695">
    <property type="entry name" value="SRP19"/>
    <property type="match status" value="1"/>
</dbReference>
<protein>
    <recommendedName>
        <fullName>Signal recognition particle 19 kDa protein</fullName>
        <shortName>SRP19</shortName>
    </recommendedName>
</protein>
<feature type="chain" id="PRO_0000135201" description="Signal recognition particle 19 kDa protein">
    <location>
        <begin position="1"/>
        <end position="160"/>
    </location>
</feature>
<feature type="region of interest" description="Disordered" evidence="3">
    <location>
        <begin position="122"/>
        <end position="160"/>
    </location>
</feature>
<feature type="compositionally biased region" description="Polar residues" evidence="3">
    <location>
        <begin position="123"/>
        <end position="143"/>
    </location>
</feature>
<feature type="sequence conflict" description="In Ref. 1; AAA79181." evidence="4" ref="1">
    <original>AVPMKKNWSPSMKHNDME</original>
    <variation>GSHEKKLEPQHETQRYGAVGT</variation>
    <location>
        <begin position="4"/>
        <end position="21"/>
    </location>
</feature>
<feature type="sequence conflict" description="In Ref. 1; AAA79181." evidence="4" ref="1">
    <original>VL</original>
    <variation>AV</variation>
    <location>
        <begin position="60"/>
        <end position="61"/>
    </location>
</feature>
<feature type="sequence conflict" description="In Ref. 1; AAA79181." evidence="4" ref="1">
    <original>N</original>
    <variation>I</variation>
    <location>
        <position position="103"/>
    </location>
</feature>
<accession>P49963</accession>
<accession>Q9VS53</accession>
<comment type="function">
    <text evidence="1">Component of the signal recognition particle (SRP) complex, a ribonucleoprotein complex that mediates the cotranslational targeting of secretory and membrane proteins to the endoplasmic reticulum (ER) (By similarity). Binds directly to 7SL RNA (By similarity). Mediates binding of Srp54 to the SRP complex (By similarity).</text>
</comment>
<comment type="subunit">
    <text evidence="2">Component of a signal recognition particle complex that consists of a 7SL RNA molecule of 300 nucleotides and six protein subunits: Srp72, Srp68, Srp54, Srp19, Srp14 and Srp9.</text>
</comment>
<comment type="subcellular location">
    <subcellularLocation>
        <location evidence="2">Cytoplasm</location>
    </subcellularLocation>
    <subcellularLocation>
        <location evidence="2">Nucleus</location>
        <location evidence="2">Nucleolus</location>
    </subcellularLocation>
</comment>
<comment type="similarity">
    <text evidence="4">Belongs to the SRP19 family.</text>
</comment>
<reference key="1">
    <citation type="journal article" date="1997" name="Gene">
        <title>A homologue of the 19 kDa signal recognition particle protein locus in Drosophila melanogaster.</title>
        <authorList>
            <person name="Lai C.Q."/>
            <person name="Langley C.H."/>
        </authorList>
    </citation>
    <scope>NUCLEOTIDE SEQUENCE [MRNA]</scope>
    <source>
        <strain>Samarkand</strain>
    </source>
</reference>
<reference key="2">
    <citation type="journal article" date="2000" name="Science">
        <title>The genome sequence of Drosophila melanogaster.</title>
        <authorList>
            <person name="Adams M.D."/>
            <person name="Celniker S.E."/>
            <person name="Holt R.A."/>
            <person name="Evans C.A."/>
            <person name="Gocayne J.D."/>
            <person name="Amanatides P.G."/>
            <person name="Scherer S.E."/>
            <person name="Li P.W."/>
            <person name="Hoskins R.A."/>
            <person name="Galle R.F."/>
            <person name="George R.A."/>
            <person name="Lewis S.E."/>
            <person name="Richards S."/>
            <person name="Ashburner M."/>
            <person name="Henderson S.N."/>
            <person name="Sutton G.G."/>
            <person name="Wortman J.R."/>
            <person name="Yandell M.D."/>
            <person name="Zhang Q."/>
            <person name="Chen L.X."/>
            <person name="Brandon R.C."/>
            <person name="Rogers Y.-H.C."/>
            <person name="Blazej R.G."/>
            <person name="Champe M."/>
            <person name="Pfeiffer B.D."/>
            <person name="Wan K.H."/>
            <person name="Doyle C."/>
            <person name="Baxter E.G."/>
            <person name="Helt G."/>
            <person name="Nelson C.R."/>
            <person name="Miklos G.L.G."/>
            <person name="Abril J.F."/>
            <person name="Agbayani A."/>
            <person name="An H.-J."/>
            <person name="Andrews-Pfannkoch C."/>
            <person name="Baldwin D."/>
            <person name="Ballew R.M."/>
            <person name="Basu A."/>
            <person name="Baxendale J."/>
            <person name="Bayraktaroglu L."/>
            <person name="Beasley E.M."/>
            <person name="Beeson K.Y."/>
            <person name="Benos P.V."/>
            <person name="Berman B.P."/>
            <person name="Bhandari D."/>
            <person name="Bolshakov S."/>
            <person name="Borkova D."/>
            <person name="Botchan M.R."/>
            <person name="Bouck J."/>
            <person name="Brokstein P."/>
            <person name="Brottier P."/>
            <person name="Burtis K.C."/>
            <person name="Busam D.A."/>
            <person name="Butler H."/>
            <person name="Cadieu E."/>
            <person name="Center A."/>
            <person name="Chandra I."/>
            <person name="Cherry J.M."/>
            <person name="Cawley S."/>
            <person name="Dahlke C."/>
            <person name="Davenport L.B."/>
            <person name="Davies P."/>
            <person name="de Pablos B."/>
            <person name="Delcher A."/>
            <person name="Deng Z."/>
            <person name="Mays A.D."/>
            <person name="Dew I."/>
            <person name="Dietz S.M."/>
            <person name="Dodson K."/>
            <person name="Doup L.E."/>
            <person name="Downes M."/>
            <person name="Dugan-Rocha S."/>
            <person name="Dunkov B.C."/>
            <person name="Dunn P."/>
            <person name="Durbin K.J."/>
            <person name="Evangelista C.C."/>
            <person name="Ferraz C."/>
            <person name="Ferriera S."/>
            <person name="Fleischmann W."/>
            <person name="Fosler C."/>
            <person name="Gabrielian A.E."/>
            <person name="Garg N.S."/>
            <person name="Gelbart W.M."/>
            <person name="Glasser K."/>
            <person name="Glodek A."/>
            <person name="Gong F."/>
            <person name="Gorrell J.H."/>
            <person name="Gu Z."/>
            <person name="Guan P."/>
            <person name="Harris M."/>
            <person name="Harris N.L."/>
            <person name="Harvey D.A."/>
            <person name="Heiman T.J."/>
            <person name="Hernandez J.R."/>
            <person name="Houck J."/>
            <person name="Hostin D."/>
            <person name="Houston K.A."/>
            <person name="Howland T.J."/>
            <person name="Wei M.-H."/>
            <person name="Ibegwam C."/>
            <person name="Jalali M."/>
            <person name="Kalush F."/>
            <person name="Karpen G.H."/>
            <person name="Ke Z."/>
            <person name="Kennison J.A."/>
            <person name="Ketchum K.A."/>
            <person name="Kimmel B.E."/>
            <person name="Kodira C.D."/>
            <person name="Kraft C.L."/>
            <person name="Kravitz S."/>
            <person name="Kulp D."/>
            <person name="Lai Z."/>
            <person name="Lasko P."/>
            <person name="Lei Y."/>
            <person name="Levitsky A.A."/>
            <person name="Li J.H."/>
            <person name="Li Z."/>
            <person name="Liang Y."/>
            <person name="Lin X."/>
            <person name="Liu X."/>
            <person name="Mattei B."/>
            <person name="McIntosh T.C."/>
            <person name="McLeod M.P."/>
            <person name="McPherson D."/>
            <person name="Merkulov G."/>
            <person name="Milshina N.V."/>
            <person name="Mobarry C."/>
            <person name="Morris J."/>
            <person name="Moshrefi A."/>
            <person name="Mount S.M."/>
            <person name="Moy M."/>
            <person name="Murphy B."/>
            <person name="Murphy L."/>
            <person name="Muzny D.M."/>
            <person name="Nelson D.L."/>
            <person name="Nelson D.R."/>
            <person name="Nelson K.A."/>
            <person name="Nixon K."/>
            <person name="Nusskern D.R."/>
            <person name="Pacleb J.M."/>
            <person name="Palazzolo M."/>
            <person name="Pittman G.S."/>
            <person name="Pan S."/>
            <person name="Pollard J."/>
            <person name="Puri V."/>
            <person name="Reese M.G."/>
            <person name="Reinert K."/>
            <person name="Remington K."/>
            <person name="Saunders R.D.C."/>
            <person name="Scheeler F."/>
            <person name="Shen H."/>
            <person name="Shue B.C."/>
            <person name="Siden-Kiamos I."/>
            <person name="Simpson M."/>
            <person name="Skupski M.P."/>
            <person name="Smith T.J."/>
            <person name="Spier E."/>
            <person name="Spradling A.C."/>
            <person name="Stapleton M."/>
            <person name="Strong R."/>
            <person name="Sun E."/>
            <person name="Svirskas R."/>
            <person name="Tector C."/>
            <person name="Turner R."/>
            <person name="Venter E."/>
            <person name="Wang A.H."/>
            <person name="Wang X."/>
            <person name="Wang Z.-Y."/>
            <person name="Wassarman D.A."/>
            <person name="Weinstock G.M."/>
            <person name="Weissenbach J."/>
            <person name="Williams S.M."/>
            <person name="Woodage T."/>
            <person name="Worley K.C."/>
            <person name="Wu D."/>
            <person name="Yang S."/>
            <person name="Yao Q.A."/>
            <person name="Ye J."/>
            <person name="Yeh R.-F."/>
            <person name="Zaveri J.S."/>
            <person name="Zhan M."/>
            <person name="Zhang G."/>
            <person name="Zhao Q."/>
            <person name="Zheng L."/>
            <person name="Zheng X.H."/>
            <person name="Zhong F.N."/>
            <person name="Zhong W."/>
            <person name="Zhou X."/>
            <person name="Zhu S.C."/>
            <person name="Zhu X."/>
            <person name="Smith H.O."/>
            <person name="Gibbs R.A."/>
            <person name="Myers E.W."/>
            <person name="Rubin G.M."/>
            <person name="Venter J.C."/>
        </authorList>
    </citation>
    <scope>NUCLEOTIDE SEQUENCE [LARGE SCALE GENOMIC DNA]</scope>
    <source>
        <strain>Berkeley</strain>
    </source>
</reference>
<reference key="3">
    <citation type="journal article" date="2002" name="Genome Biol.">
        <title>Annotation of the Drosophila melanogaster euchromatic genome: a systematic review.</title>
        <authorList>
            <person name="Misra S."/>
            <person name="Crosby M.A."/>
            <person name="Mungall C.J."/>
            <person name="Matthews B.B."/>
            <person name="Campbell K.S."/>
            <person name="Hradecky P."/>
            <person name="Huang Y."/>
            <person name="Kaminker J.S."/>
            <person name="Millburn G.H."/>
            <person name="Prochnik S.E."/>
            <person name="Smith C.D."/>
            <person name="Tupy J.L."/>
            <person name="Whitfield E.J."/>
            <person name="Bayraktaroglu L."/>
            <person name="Berman B.P."/>
            <person name="Bettencourt B.R."/>
            <person name="Celniker S.E."/>
            <person name="de Grey A.D.N.J."/>
            <person name="Drysdale R.A."/>
            <person name="Harris N.L."/>
            <person name="Richter J."/>
            <person name="Russo S."/>
            <person name="Schroeder A.J."/>
            <person name="Shu S.Q."/>
            <person name="Stapleton M."/>
            <person name="Yamada C."/>
            <person name="Ashburner M."/>
            <person name="Gelbart W.M."/>
            <person name="Rubin G.M."/>
            <person name="Lewis S.E."/>
        </authorList>
    </citation>
    <scope>GENOME REANNOTATION</scope>
    <source>
        <strain>Berkeley</strain>
    </source>
</reference>
<reference key="4">
    <citation type="journal article" date="2002" name="Genome Biol.">
        <title>A Drosophila full-length cDNA resource.</title>
        <authorList>
            <person name="Stapleton M."/>
            <person name="Carlson J.W."/>
            <person name="Brokstein P."/>
            <person name="Yu C."/>
            <person name="Champe M."/>
            <person name="George R.A."/>
            <person name="Guarin H."/>
            <person name="Kronmiller B."/>
            <person name="Pacleb J.M."/>
            <person name="Park S."/>
            <person name="Wan K.H."/>
            <person name="Rubin G.M."/>
            <person name="Celniker S.E."/>
        </authorList>
    </citation>
    <scope>NUCLEOTIDE SEQUENCE [LARGE SCALE MRNA]</scope>
    <source>
        <strain>Berkeley</strain>
        <tissue>Head</tissue>
    </source>
</reference>
<organism>
    <name type="scientific">Drosophila melanogaster</name>
    <name type="common">Fruit fly</name>
    <dbReference type="NCBI Taxonomy" id="7227"/>
    <lineage>
        <taxon>Eukaryota</taxon>
        <taxon>Metazoa</taxon>
        <taxon>Ecdysozoa</taxon>
        <taxon>Arthropoda</taxon>
        <taxon>Hexapoda</taxon>
        <taxon>Insecta</taxon>
        <taxon>Pterygota</taxon>
        <taxon>Neoptera</taxon>
        <taxon>Endopterygota</taxon>
        <taxon>Diptera</taxon>
        <taxon>Brachycera</taxon>
        <taxon>Muscomorpha</taxon>
        <taxon>Ephydroidea</taxon>
        <taxon>Drosophilidae</taxon>
        <taxon>Drosophila</taxon>
        <taxon>Sophophora</taxon>
    </lineage>
</organism>
<proteinExistence type="evidence at transcript level"/>